<reference key="1">
    <citation type="submission" date="2007-06" db="EMBL/GenBank/DDBJ databases">
        <authorList>
            <person name="Brinkac L.M."/>
            <person name="Daugherty S."/>
            <person name="Dodson R.J."/>
            <person name="Madupu R."/>
            <person name="Brown J.L."/>
            <person name="Bruce D."/>
            <person name="Detter C."/>
            <person name="Munk C."/>
            <person name="Smith L.A."/>
            <person name="Smith T.J."/>
            <person name="White O."/>
            <person name="Brettin T.S."/>
        </authorList>
    </citation>
    <scope>NUCLEOTIDE SEQUENCE [LARGE SCALE GENOMIC DNA]</scope>
    <source>
        <strain>Langeland / NCTC 10281 / Type F</strain>
    </source>
</reference>
<feature type="chain" id="PRO_1000051499" description="Putative D-threonate 4-phosphate dehydrogenase">
    <location>
        <begin position="1"/>
        <end position="334"/>
    </location>
</feature>
<feature type="binding site" evidence="1">
    <location>
        <position position="141"/>
    </location>
    <ligand>
        <name>substrate</name>
    </ligand>
</feature>
<feature type="binding site" evidence="1">
    <location>
        <position position="142"/>
    </location>
    <ligand>
        <name>substrate</name>
    </ligand>
</feature>
<feature type="binding site" evidence="1">
    <location>
        <position position="171"/>
    </location>
    <ligand>
        <name>a divalent metal cation</name>
        <dbReference type="ChEBI" id="CHEBI:60240"/>
        <note>ligand shared between dimeric partners</note>
    </ligand>
</feature>
<feature type="binding site" evidence="1">
    <location>
        <position position="215"/>
    </location>
    <ligand>
        <name>a divalent metal cation</name>
        <dbReference type="ChEBI" id="CHEBI:60240"/>
        <note>ligand shared between dimeric partners</note>
    </ligand>
</feature>
<feature type="binding site" evidence="1">
    <location>
        <position position="270"/>
    </location>
    <ligand>
        <name>a divalent metal cation</name>
        <dbReference type="ChEBI" id="CHEBI:60240"/>
        <note>ligand shared between dimeric partners</note>
    </ligand>
</feature>
<feature type="binding site" evidence="1">
    <location>
        <position position="278"/>
    </location>
    <ligand>
        <name>substrate</name>
    </ligand>
</feature>
<feature type="binding site" evidence="1">
    <location>
        <position position="296"/>
    </location>
    <ligand>
        <name>substrate</name>
    </ligand>
</feature>
<sequence>MINNKPIIGIPIGDPAGVGPEIVVKSLTEAEVYEKCNPILIGDAKVIKQAMGFCNVNLNINSIKKADEGKFTLGTIDLIDLNNIDIDELKIGKVQGIAGKAAFEYIKKSVEMAKEGELDAIATTPINKESLREGNVNYIGHTEILADLTDTEDPLTMFEVRGMRVFFLTRHVSLRKACDLVTKERVLDYIIRCSEALEKLGVKDGKMAVAGLNPHSGEHGLFGDEEMKAVVPAIEEAQKMGYKVEGPIGADSVFHLALKGRYNSVLSLYHDQGHIATKTLDFERTIAVTNGMPILRTSVDHGTAFDIAGTGQASSVSMVEAIVLAAKYSPKFKK</sequence>
<accession>A7GFE5</accession>
<dbReference type="EC" id="1.1.1.408" evidence="2"/>
<dbReference type="EMBL" id="CP000728">
    <property type="protein sequence ID" value="ABS39431.1"/>
    <property type="molecule type" value="Genomic_DNA"/>
</dbReference>
<dbReference type="RefSeq" id="WP_004451569.1">
    <property type="nucleotide sequence ID" value="NC_009699.1"/>
</dbReference>
<dbReference type="SMR" id="A7GFE5"/>
<dbReference type="KEGG" id="cbf:CLI_2255"/>
<dbReference type="HOGENOM" id="CLU_040168_0_1_9"/>
<dbReference type="Proteomes" id="UP000002410">
    <property type="component" value="Chromosome"/>
</dbReference>
<dbReference type="GO" id="GO:0046872">
    <property type="term" value="F:metal ion binding"/>
    <property type="evidence" value="ECO:0007669"/>
    <property type="project" value="UniProtKB-KW"/>
</dbReference>
<dbReference type="GO" id="GO:0051287">
    <property type="term" value="F:NAD binding"/>
    <property type="evidence" value="ECO:0007669"/>
    <property type="project" value="InterPro"/>
</dbReference>
<dbReference type="GO" id="GO:0016491">
    <property type="term" value="F:oxidoreductase activity"/>
    <property type="evidence" value="ECO:0007669"/>
    <property type="project" value="UniProtKB-KW"/>
</dbReference>
<dbReference type="Gene3D" id="3.40.718.10">
    <property type="entry name" value="Isopropylmalate Dehydrogenase"/>
    <property type="match status" value="1"/>
</dbReference>
<dbReference type="InterPro" id="IPR005255">
    <property type="entry name" value="PdxA_fam"/>
</dbReference>
<dbReference type="NCBIfam" id="TIGR00557">
    <property type="entry name" value="pdxA"/>
    <property type="match status" value="1"/>
</dbReference>
<dbReference type="NCBIfam" id="NF002992">
    <property type="entry name" value="PRK03743.1"/>
    <property type="match status" value="1"/>
</dbReference>
<dbReference type="PANTHER" id="PTHR30004">
    <property type="entry name" value="4-HYDROXYTHREONINE-4-PHOSPHATE DEHYDROGENASE"/>
    <property type="match status" value="1"/>
</dbReference>
<dbReference type="PANTHER" id="PTHR30004:SF6">
    <property type="entry name" value="D-THREONATE 4-PHOSPHATE DEHYDROGENASE"/>
    <property type="match status" value="1"/>
</dbReference>
<dbReference type="Pfam" id="PF04166">
    <property type="entry name" value="PdxA"/>
    <property type="match status" value="1"/>
</dbReference>
<dbReference type="SUPFAM" id="SSF53659">
    <property type="entry name" value="Isocitrate/Isopropylmalate dehydrogenase-like"/>
    <property type="match status" value="1"/>
</dbReference>
<name>PDXA2_CLOBL</name>
<comment type="function">
    <text evidence="2">Catalyzes the NAD-dependent oxidation and subsequent decarboxylation of D-threonate 4-phosphate to produce dihydroxyacetone phosphate (DHAP).</text>
</comment>
<comment type="catalytic activity">
    <reaction evidence="2">
        <text>4-O-phospho-D-threonate + NAD(+) = dihydroxyacetone phosphate + CO2 + NADH</text>
        <dbReference type="Rhea" id="RHEA:52396"/>
        <dbReference type="ChEBI" id="CHEBI:16526"/>
        <dbReference type="ChEBI" id="CHEBI:57540"/>
        <dbReference type="ChEBI" id="CHEBI:57642"/>
        <dbReference type="ChEBI" id="CHEBI:57945"/>
        <dbReference type="ChEBI" id="CHEBI:136590"/>
        <dbReference type="EC" id="1.1.1.408"/>
    </reaction>
</comment>
<comment type="cofactor">
    <cofactor evidence="1">
        <name>a divalent metal cation</name>
        <dbReference type="ChEBI" id="CHEBI:60240"/>
    </cofactor>
    <text evidence="1">Binds 1 divalent metal cation per subunit.</text>
</comment>
<comment type="subunit">
    <text evidence="2">Homodimer.</text>
</comment>
<comment type="similarity">
    <text evidence="3">Belongs to the PdxA family. PdxA2 subfamily.</text>
</comment>
<proteinExistence type="inferred from homology"/>
<evidence type="ECO:0000250" key="1">
    <source>
        <dbReference type="UniProtKB" id="P19624"/>
    </source>
</evidence>
<evidence type="ECO:0000250" key="2">
    <source>
        <dbReference type="UniProtKB" id="P58718"/>
    </source>
</evidence>
<evidence type="ECO:0000305" key="3"/>
<keyword id="KW-0119">Carbohydrate metabolism</keyword>
<keyword id="KW-0479">Metal-binding</keyword>
<keyword id="KW-0520">NAD</keyword>
<keyword id="KW-0560">Oxidoreductase</keyword>
<protein>
    <recommendedName>
        <fullName evidence="2">Putative D-threonate 4-phosphate dehydrogenase</fullName>
        <ecNumber evidence="2">1.1.1.408</ecNumber>
    </recommendedName>
</protein>
<gene>
    <name type="primary">pdxA</name>
    <name type="ordered locus">CLI_2255</name>
</gene>
<organism>
    <name type="scientific">Clostridium botulinum (strain Langeland / NCTC 10281 / Type F)</name>
    <dbReference type="NCBI Taxonomy" id="441772"/>
    <lineage>
        <taxon>Bacteria</taxon>
        <taxon>Bacillati</taxon>
        <taxon>Bacillota</taxon>
        <taxon>Clostridia</taxon>
        <taxon>Eubacteriales</taxon>
        <taxon>Clostridiaceae</taxon>
        <taxon>Clostridium</taxon>
    </lineage>
</organism>